<protein>
    <recommendedName>
        <fullName>SURP and G-patch domain-containing protein 1</fullName>
    </recommendedName>
    <alternativeName>
        <fullName>Splicing factor 4</fullName>
    </alternativeName>
</protein>
<accession>Q68FU8</accession>
<evidence type="ECO:0000250" key="1"/>
<evidence type="ECO:0000250" key="2">
    <source>
        <dbReference type="UniProtKB" id="Q8IWZ8"/>
    </source>
</evidence>
<evidence type="ECO:0000255" key="3"/>
<evidence type="ECO:0000255" key="4">
    <source>
        <dbReference type="PROSITE-ProRule" id="PRU00092"/>
    </source>
</evidence>
<evidence type="ECO:0000256" key="5">
    <source>
        <dbReference type="SAM" id="MobiDB-lite"/>
    </source>
</evidence>
<evidence type="ECO:0000305" key="6"/>
<evidence type="ECO:0007744" key="7">
    <source>
    </source>
</evidence>
<dbReference type="EMBL" id="BC079341">
    <property type="protein sequence ID" value="AAH79341.1"/>
    <property type="molecule type" value="mRNA"/>
</dbReference>
<dbReference type="RefSeq" id="NP_001011920.1">
    <property type="nucleotide sequence ID" value="NM_001011920.1"/>
</dbReference>
<dbReference type="SMR" id="Q68FU8"/>
<dbReference type="FunCoup" id="Q68FU8">
    <property type="interactions" value="3473"/>
</dbReference>
<dbReference type="STRING" id="10116.ENSRNOP00000072874"/>
<dbReference type="GlyGen" id="Q68FU8">
    <property type="glycosylation" value="1 site"/>
</dbReference>
<dbReference type="iPTMnet" id="Q68FU8"/>
<dbReference type="PhosphoSitePlus" id="Q68FU8"/>
<dbReference type="jPOST" id="Q68FU8"/>
<dbReference type="PaxDb" id="10116-ENSRNOP00000027826"/>
<dbReference type="Ensembl" id="ENSRNOT00000110921.1">
    <property type="protein sequence ID" value="ENSRNOP00000082578.1"/>
    <property type="gene ID" value="ENSRNOG00000052111.2"/>
</dbReference>
<dbReference type="GeneID" id="290666"/>
<dbReference type="KEGG" id="rno:290666"/>
<dbReference type="UCSC" id="RGD:1310496">
    <property type="organism name" value="rat"/>
</dbReference>
<dbReference type="AGR" id="RGD:1310496"/>
<dbReference type="CTD" id="57794"/>
<dbReference type="RGD" id="1310496">
    <property type="gene designation" value="Sugp1"/>
</dbReference>
<dbReference type="eggNOG" id="KOG0965">
    <property type="taxonomic scope" value="Eukaryota"/>
</dbReference>
<dbReference type="GeneTree" id="ENSGT00410000025695"/>
<dbReference type="HOGENOM" id="CLU_028403_0_0_1"/>
<dbReference type="InParanoid" id="Q68FU8"/>
<dbReference type="OMA" id="QIMWERT"/>
<dbReference type="OrthoDB" id="4822at2759"/>
<dbReference type="PhylomeDB" id="Q68FU8"/>
<dbReference type="TreeFam" id="TF326321"/>
<dbReference type="Reactome" id="R-RNO-72163">
    <property type="pathway name" value="mRNA Splicing - Major Pathway"/>
</dbReference>
<dbReference type="PRO" id="PR:Q68FU8"/>
<dbReference type="Proteomes" id="UP000002494">
    <property type="component" value="Chromosome 16"/>
</dbReference>
<dbReference type="Bgee" id="ENSRNOG00000052111">
    <property type="expression patterns" value="Expressed in pancreas and 20 other cell types or tissues"/>
</dbReference>
<dbReference type="GO" id="GO:0005654">
    <property type="term" value="C:nucleoplasm"/>
    <property type="evidence" value="ECO:0000318"/>
    <property type="project" value="GO_Central"/>
</dbReference>
<dbReference type="GO" id="GO:0005681">
    <property type="term" value="C:spliceosomal complex"/>
    <property type="evidence" value="ECO:0007669"/>
    <property type="project" value="UniProtKB-KW"/>
</dbReference>
<dbReference type="GO" id="GO:0003729">
    <property type="term" value="F:mRNA binding"/>
    <property type="evidence" value="ECO:0007669"/>
    <property type="project" value="Ensembl"/>
</dbReference>
<dbReference type="GO" id="GO:0006397">
    <property type="term" value="P:mRNA processing"/>
    <property type="evidence" value="ECO:0007669"/>
    <property type="project" value="UniProtKB-KW"/>
</dbReference>
<dbReference type="GO" id="GO:0008380">
    <property type="term" value="P:RNA splicing"/>
    <property type="evidence" value="ECO:0007669"/>
    <property type="project" value="UniProtKB-KW"/>
</dbReference>
<dbReference type="FunFam" id="1.10.10.790:FF:000004">
    <property type="entry name" value="SURP and G-patch domain-containing protein 1"/>
    <property type="match status" value="1"/>
</dbReference>
<dbReference type="Gene3D" id="1.10.10.790">
    <property type="entry name" value="Surp module"/>
    <property type="match status" value="2"/>
</dbReference>
<dbReference type="InterPro" id="IPR000467">
    <property type="entry name" value="G_patch_dom"/>
</dbReference>
<dbReference type="InterPro" id="IPR040169">
    <property type="entry name" value="SUGP1/2"/>
</dbReference>
<dbReference type="InterPro" id="IPR000061">
    <property type="entry name" value="Surp"/>
</dbReference>
<dbReference type="InterPro" id="IPR035967">
    <property type="entry name" value="SWAP/Surp_sf"/>
</dbReference>
<dbReference type="PANTHER" id="PTHR23340">
    <property type="entry name" value="ARGININE/SERINE RICH SPLICING FACTOR SF4/14"/>
    <property type="match status" value="1"/>
</dbReference>
<dbReference type="PANTHER" id="PTHR23340:SF3">
    <property type="entry name" value="SURP AND G-PATCH DOMAIN-CONTAINING PROTEIN 1"/>
    <property type="match status" value="1"/>
</dbReference>
<dbReference type="Pfam" id="PF01585">
    <property type="entry name" value="G-patch"/>
    <property type="match status" value="1"/>
</dbReference>
<dbReference type="Pfam" id="PF01805">
    <property type="entry name" value="Surp"/>
    <property type="match status" value="2"/>
</dbReference>
<dbReference type="SMART" id="SM00443">
    <property type="entry name" value="G_patch"/>
    <property type="match status" value="1"/>
</dbReference>
<dbReference type="SMART" id="SM00648">
    <property type="entry name" value="SWAP"/>
    <property type="match status" value="2"/>
</dbReference>
<dbReference type="SUPFAM" id="SSF109905">
    <property type="entry name" value="Surp module (SWAP domain)"/>
    <property type="match status" value="2"/>
</dbReference>
<dbReference type="PROSITE" id="PS50174">
    <property type="entry name" value="G_PATCH"/>
    <property type="match status" value="1"/>
</dbReference>
<dbReference type="PROSITE" id="PS50128">
    <property type="entry name" value="SURP"/>
    <property type="match status" value="2"/>
</dbReference>
<feature type="chain" id="PRO_0000097703" description="SURP and G-patch domain-containing protein 1">
    <location>
        <begin position="1"/>
        <end position="644"/>
    </location>
</feature>
<feature type="repeat" description="SURP motif 1">
    <location>
        <begin position="188"/>
        <end position="230"/>
    </location>
</feature>
<feature type="repeat" description="SURP motif 2">
    <location>
        <begin position="263"/>
        <end position="306"/>
    </location>
</feature>
<feature type="domain" description="G-patch" evidence="4">
    <location>
        <begin position="561"/>
        <end position="608"/>
    </location>
</feature>
<feature type="region of interest" description="Disordered" evidence="5">
    <location>
        <begin position="44"/>
        <end position="74"/>
    </location>
</feature>
<feature type="region of interest" description="Disordered" evidence="5">
    <location>
        <begin position="98"/>
        <end position="122"/>
    </location>
</feature>
<feature type="region of interest" description="Disordered" evidence="5">
    <location>
        <begin position="316"/>
        <end position="342"/>
    </location>
</feature>
<feature type="region of interest" description="Disordered" evidence="5">
    <location>
        <begin position="360"/>
        <end position="412"/>
    </location>
</feature>
<feature type="short sequence motif" description="Nuclear localization signal" evidence="3">
    <location>
        <begin position="379"/>
        <end position="385"/>
    </location>
</feature>
<feature type="compositionally biased region" description="Basic and acidic residues" evidence="5">
    <location>
        <begin position="44"/>
        <end position="54"/>
    </location>
</feature>
<feature type="compositionally biased region" description="Pro residues" evidence="5">
    <location>
        <begin position="360"/>
        <end position="369"/>
    </location>
</feature>
<feature type="modified residue" description="Phosphothreonine" evidence="2">
    <location>
        <position position="128"/>
    </location>
</feature>
<feature type="modified residue" description="Phosphoserine" evidence="2">
    <location>
        <position position="253"/>
    </location>
</feature>
<feature type="modified residue" description="Phosphoserine" evidence="2">
    <location>
        <position position="323"/>
    </location>
</feature>
<feature type="modified residue" description="Phosphoserine" evidence="7">
    <location>
        <position position="408"/>
    </location>
</feature>
<feature type="modified residue" description="Phosphoserine" evidence="7">
    <location>
        <position position="410"/>
    </location>
</feature>
<feature type="modified residue" description="Phosphoserine" evidence="2">
    <location>
        <position position="413"/>
    </location>
</feature>
<feature type="modified residue" description="Phosphoserine" evidence="2">
    <location>
        <position position="484"/>
    </location>
</feature>
<organism>
    <name type="scientific">Rattus norvegicus</name>
    <name type="common">Rat</name>
    <dbReference type="NCBI Taxonomy" id="10116"/>
    <lineage>
        <taxon>Eukaryota</taxon>
        <taxon>Metazoa</taxon>
        <taxon>Chordata</taxon>
        <taxon>Craniata</taxon>
        <taxon>Vertebrata</taxon>
        <taxon>Euteleostomi</taxon>
        <taxon>Mammalia</taxon>
        <taxon>Eutheria</taxon>
        <taxon>Euarchontoglires</taxon>
        <taxon>Glires</taxon>
        <taxon>Rodentia</taxon>
        <taxon>Myomorpha</taxon>
        <taxon>Muroidea</taxon>
        <taxon>Muridae</taxon>
        <taxon>Murinae</taxon>
        <taxon>Rattus</taxon>
    </lineage>
</organism>
<keyword id="KW-0507">mRNA processing</keyword>
<keyword id="KW-0508">mRNA splicing</keyword>
<keyword id="KW-0539">Nucleus</keyword>
<keyword id="KW-0597">Phosphoprotein</keyword>
<keyword id="KW-1185">Reference proteome</keyword>
<keyword id="KW-0677">Repeat</keyword>
<keyword id="KW-0747">Spliceosome</keyword>
<gene>
    <name type="primary">Sugp1</name>
    <name type="synonym">Sf4</name>
</gene>
<name>SUGP1_RAT</name>
<comment type="function">
    <text evidence="1">Plays a role in pre-mRNA splicing.</text>
</comment>
<comment type="subunit">
    <text evidence="1">Component of the spliceosome.</text>
</comment>
<comment type="subcellular location">
    <subcellularLocation>
        <location evidence="6">Nucleus</location>
    </subcellularLocation>
</comment>
<reference key="1">
    <citation type="journal article" date="2004" name="Genome Res.">
        <title>The status, quality, and expansion of the NIH full-length cDNA project: the Mammalian Gene Collection (MGC).</title>
        <authorList>
            <consortium name="The MGC Project Team"/>
        </authorList>
    </citation>
    <scope>NUCLEOTIDE SEQUENCE [LARGE SCALE MRNA]</scope>
    <source>
        <tissue>Kidney</tissue>
    </source>
</reference>
<reference key="2">
    <citation type="journal article" date="2012" name="Nat. Commun.">
        <title>Quantitative maps of protein phosphorylation sites across 14 different rat organs and tissues.</title>
        <authorList>
            <person name="Lundby A."/>
            <person name="Secher A."/>
            <person name="Lage K."/>
            <person name="Nordsborg N.B."/>
            <person name="Dmytriyev A."/>
            <person name="Lundby C."/>
            <person name="Olsen J.V."/>
        </authorList>
    </citation>
    <scope>PHOSPHORYLATION [LARGE SCALE ANALYSIS] AT SER-408 AND SER-410</scope>
    <scope>IDENTIFICATION BY MASS SPECTROMETRY [LARGE SCALE ANALYSIS]</scope>
</reference>
<proteinExistence type="evidence at protein level"/>
<sequence length="644" mass="72595">MSLKMDNRDVAGKANRWFGMAQPKSGKMNMNILHQEELIAQKKREIEARMEQKARQSHVASPQPPHPGEVADAQNSCISNKFANDGSFLQQFLKLQKAQASTDSAPRAPPSSPAPSSLKRPLLLSKRTGLGLGSPMGPVKNYSHAKQLPVAHRPSVFQSPDDDDEEEDYEQWLEIKVSPPEGAETRRVIEKLARFVAEGGPELEKVAMEDYKDNPAFTFLHDKNSREFLYYRKKVAEIRKEAQKPQAATQKVSPPEDEEAKNLAEKLARFIADGGPEVETIALQNNRENQAFSFLYDPNSQGYRYYKQKLEEFRKAKAGSTGSLPAPVPNPSLRRKSAPEALSGAVPPITACPTPVAPAPAVNPTPSIPGKPTATATVKRKRKSRWGPEEDKVELPPAELAQKDTDASPSPLSVQDLKGLGYEKGKPVGLVGVTELSDAQKKQLKEQQEMQQMYDMIMQHKRAMQDMQLLWEKALQQHQHGYDSDEEVDSELGTWEHQLRRMEMDKTREWAEQLTQMGRGKHFIGDFLPPDELEKFMETFKALKEGREPDYSEYKEFKLTVENIGYQMLMKMGWKEGEGLGTEGQGIKNPVNKGATTIDGAGFGIDRPAELSKEDDEYEAFRKRMMLAYRFRPNPLNNPRRPYY</sequence>